<keyword id="KW-0025">Alternative splicing</keyword>
<keyword id="KW-0028">Amino-acid biosynthesis</keyword>
<keyword id="KW-0150">Chloroplast</keyword>
<keyword id="KW-0220">Diaminopimelate biosynthesis</keyword>
<keyword id="KW-0457">Lysine biosynthesis</keyword>
<keyword id="KW-0520">NAD</keyword>
<keyword id="KW-0521">NADP</keyword>
<keyword id="KW-0560">Oxidoreductase</keyword>
<keyword id="KW-0934">Plastid</keyword>
<keyword id="KW-1185">Reference proteome</keyword>
<keyword id="KW-0809">Transit peptide</keyword>
<protein>
    <recommendedName>
        <fullName>Probable 4-hydroxy-tetrahydrodipicolinate reductase 2, chloroplastic</fullName>
        <shortName>HTPA reductase 2</shortName>
        <ecNumber>1.17.1.8</ecNumber>
    </recommendedName>
</protein>
<evidence type="ECO:0000250" key="1"/>
<evidence type="ECO:0000255" key="2"/>
<evidence type="ECO:0000303" key="3">
    <source>
    </source>
</evidence>
<evidence type="ECO:0000305" key="4"/>
<evidence type="ECO:0000312" key="5">
    <source>
        <dbReference type="EMBL" id="EEE58685.1"/>
    </source>
</evidence>
<gene>
    <name type="primary">DAPB2</name>
    <name type="ordered locus">Os03g0245100</name>
    <name type="ordered locus">LOC_Os03g14120</name>
    <name type="ORF">OsJ_009732</name>
    <name evidence="5" type="ORF">OsJ_10116</name>
</gene>
<organism>
    <name type="scientific">Oryza sativa subsp. japonica</name>
    <name type="common">Rice</name>
    <dbReference type="NCBI Taxonomy" id="39947"/>
    <lineage>
        <taxon>Eukaryota</taxon>
        <taxon>Viridiplantae</taxon>
        <taxon>Streptophyta</taxon>
        <taxon>Embryophyta</taxon>
        <taxon>Tracheophyta</taxon>
        <taxon>Spermatophyta</taxon>
        <taxon>Magnoliopsida</taxon>
        <taxon>Liliopsida</taxon>
        <taxon>Poales</taxon>
        <taxon>Poaceae</taxon>
        <taxon>BOP clade</taxon>
        <taxon>Oryzoideae</taxon>
        <taxon>Oryzeae</taxon>
        <taxon>Oryzinae</taxon>
        <taxon>Oryza</taxon>
        <taxon>Oryza sativa</taxon>
    </lineage>
</organism>
<feature type="transit peptide" description="Chloroplast" evidence="2">
    <location>
        <begin position="1"/>
        <end position="32"/>
    </location>
</feature>
<feature type="chain" id="PRO_0000307186" description="Probable 4-hydroxy-tetrahydrodipicolinate reductase 2, chloroplastic">
    <location>
        <begin position="33"/>
        <end position="325"/>
    </location>
</feature>
<feature type="active site" description="Proton donor/acceptor" evidence="1">
    <location>
        <position position="208"/>
    </location>
</feature>
<feature type="active site" description="Proton donor" evidence="1">
    <location>
        <position position="212"/>
    </location>
</feature>
<feature type="binding site" evidence="1">
    <location>
        <begin position="57"/>
        <end position="62"/>
    </location>
    <ligand>
        <name>NAD(+)</name>
        <dbReference type="ChEBI" id="CHEBI:57540"/>
    </ligand>
</feature>
<feature type="binding site" evidence="1">
    <location>
        <begin position="149"/>
        <end position="151"/>
    </location>
    <ligand>
        <name>NAD(+)</name>
        <dbReference type="ChEBI" id="CHEBI:57540"/>
    </ligand>
</feature>
<feature type="binding site" evidence="1">
    <location>
        <begin position="172"/>
        <end position="175"/>
    </location>
    <ligand>
        <name>NAD(+)</name>
        <dbReference type="ChEBI" id="CHEBI:57540"/>
    </ligand>
</feature>
<feature type="binding site" evidence="1">
    <location>
        <begin position="217"/>
        <end position="218"/>
    </location>
    <ligand>
        <name>(S)-2,3,4,5-tetrahydrodipicolinate</name>
        <dbReference type="ChEBI" id="CHEBI:16845"/>
    </ligand>
</feature>
<feature type="splice variant" id="VSP_028630" description="In isoform 2." evidence="3">
    <location>
        <begin position="179"/>
        <end position="203"/>
    </location>
</feature>
<comment type="function">
    <text evidence="1">Catalyzes the conversion of 4-hydroxy-tetrahydrodipicolinate (HTPA) to tetrahydrodipicolinate.</text>
</comment>
<comment type="catalytic activity">
    <reaction>
        <text>(S)-2,3,4,5-tetrahydrodipicolinate + NAD(+) + H2O = (2S,4S)-4-hydroxy-2,3,4,5-tetrahydrodipicolinate + NADH + H(+)</text>
        <dbReference type="Rhea" id="RHEA:35323"/>
        <dbReference type="ChEBI" id="CHEBI:15377"/>
        <dbReference type="ChEBI" id="CHEBI:15378"/>
        <dbReference type="ChEBI" id="CHEBI:16845"/>
        <dbReference type="ChEBI" id="CHEBI:57540"/>
        <dbReference type="ChEBI" id="CHEBI:57945"/>
        <dbReference type="ChEBI" id="CHEBI:67139"/>
        <dbReference type="EC" id="1.17.1.8"/>
    </reaction>
</comment>
<comment type="catalytic activity">
    <reaction>
        <text>(S)-2,3,4,5-tetrahydrodipicolinate + NADP(+) + H2O = (2S,4S)-4-hydroxy-2,3,4,5-tetrahydrodipicolinate + NADPH + H(+)</text>
        <dbReference type="Rhea" id="RHEA:35331"/>
        <dbReference type="ChEBI" id="CHEBI:15377"/>
        <dbReference type="ChEBI" id="CHEBI:15378"/>
        <dbReference type="ChEBI" id="CHEBI:16845"/>
        <dbReference type="ChEBI" id="CHEBI:57783"/>
        <dbReference type="ChEBI" id="CHEBI:58349"/>
        <dbReference type="ChEBI" id="CHEBI:67139"/>
        <dbReference type="EC" id="1.17.1.8"/>
    </reaction>
</comment>
<comment type="pathway">
    <text>Amino-acid biosynthesis; L-lysine biosynthesis via DAP pathway; (S)-tetrahydrodipicolinate from L-aspartate: step 4/4.</text>
</comment>
<comment type="subcellular location">
    <subcellularLocation>
        <location evidence="4">Plastid</location>
        <location evidence="4">Chloroplast</location>
    </subcellularLocation>
</comment>
<comment type="alternative products">
    <event type="alternative splicing"/>
    <isoform>
        <id>Q10P67-1</id>
        <name>1</name>
        <sequence type="displayed"/>
    </isoform>
    <isoform>
        <id>Q10P67-2</id>
        <name>2</name>
        <sequence type="described" ref="VSP_028630"/>
    </isoform>
</comment>
<comment type="similarity">
    <text evidence="4">Belongs to the DapB family.</text>
</comment>
<comment type="caution">
    <text evidence="4">Was originally thought to be a dihydrodipicolinate reductase (DHDPR), catalyzing the conversion of dihydrodipicolinate to tetrahydrodipicolinate. However, it was shown in E.coli that the substrate of the enzymatic reaction is not dihydrodipicolinate (DHDP) but in fact (2S,4S)-4-hydroxy-2,3,4,5-tetrahydrodipicolinic acid (HTPA), the product released by the DapA-catalyzed reaction.</text>
</comment>
<comment type="sequence caution" evidence="4">
    <conflict type="erroneous initiation">
        <sequence resource="EMBL-CDS" id="BAF11450"/>
    </conflict>
</comment>
<dbReference type="EC" id="1.17.1.8"/>
<dbReference type="EMBL" id="DP000009">
    <property type="protein sequence ID" value="ABF94935.1"/>
    <property type="molecule type" value="Genomic_DNA"/>
</dbReference>
<dbReference type="EMBL" id="DP000009">
    <property type="protein sequence ID" value="ABF94936.1"/>
    <property type="molecule type" value="Genomic_DNA"/>
</dbReference>
<dbReference type="EMBL" id="DP000009">
    <property type="protein sequence ID" value="ABF94937.1"/>
    <property type="molecule type" value="Genomic_DNA"/>
</dbReference>
<dbReference type="EMBL" id="AP008209">
    <property type="protein sequence ID" value="BAF11450.1"/>
    <property type="status" value="ALT_INIT"/>
    <property type="molecule type" value="Genomic_DNA"/>
</dbReference>
<dbReference type="EMBL" id="AP014959">
    <property type="protein sequence ID" value="BAS83232.1"/>
    <property type="molecule type" value="Genomic_DNA"/>
</dbReference>
<dbReference type="EMBL" id="AP014959">
    <property type="protein sequence ID" value="BAS83233.1"/>
    <property type="molecule type" value="Genomic_DNA"/>
</dbReference>
<dbReference type="EMBL" id="CM000140">
    <property type="protein sequence ID" value="EEE58685.1"/>
    <property type="molecule type" value="Genomic_DNA"/>
</dbReference>
<dbReference type="EMBL" id="AK059346">
    <property type="status" value="NOT_ANNOTATED_CDS"/>
    <property type="molecule type" value="mRNA"/>
</dbReference>
<dbReference type="EMBL" id="AK102253">
    <property type="protein sequence ID" value="BAG95465.1"/>
    <property type="molecule type" value="mRNA"/>
</dbReference>
<dbReference type="RefSeq" id="XP_015631811.1">
    <molecule id="Q10P67-1"/>
    <property type="nucleotide sequence ID" value="XM_015776325.1"/>
</dbReference>
<dbReference type="SMR" id="Q10P67"/>
<dbReference type="FunCoup" id="Q10P67">
    <property type="interactions" value="188"/>
</dbReference>
<dbReference type="STRING" id="39947.Q10P67"/>
<dbReference type="PaxDb" id="39947-Q10P67"/>
<dbReference type="EnsemblPlants" id="Os03t0245100-01">
    <molecule id="Q10P67-1"/>
    <property type="protein sequence ID" value="Os03t0245100-01"/>
    <property type="gene ID" value="Os03g0245100"/>
</dbReference>
<dbReference type="GeneID" id="4332231"/>
<dbReference type="Gramene" id="Os03t0245100-01">
    <molecule id="Q10P67-1"/>
    <property type="protein sequence ID" value="Os03t0245100-01"/>
    <property type="gene ID" value="Os03g0245100"/>
</dbReference>
<dbReference type="KEGG" id="dosa:Os03g0245100"/>
<dbReference type="eggNOG" id="ENOG502QPSY">
    <property type="taxonomic scope" value="Eukaryota"/>
</dbReference>
<dbReference type="InParanoid" id="Q10P67"/>
<dbReference type="OMA" id="PINHEYM"/>
<dbReference type="OrthoDB" id="10259487at2759"/>
<dbReference type="PlantReactome" id="R-OSA-1119273">
    <property type="pathway name" value="Lysine biosynthesis I"/>
</dbReference>
<dbReference type="PlantReactome" id="R-OSA-1119283">
    <property type="pathway name" value="Lysine biosynthesis II"/>
</dbReference>
<dbReference type="PlantReactome" id="R-OSA-1119419">
    <property type="pathway name" value="Lysine biosynthesis VI"/>
</dbReference>
<dbReference type="UniPathway" id="UPA00034">
    <property type="reaction ID" value="UER00018"/>
</dbReference>
<dbReference type="Proteomes" id="UP000000763">
    <property type="component" value="Chromosome 3"/>
</dbReference>
<dbReference type="Proteomes" id="UP000007752">
    <property type="component" value="Chromosome 3"/>
</dbReference>
<dbReference type="Proteomes" id="UP000059680">
    <property type="component" value="Chromosome 3"/>
</dbReference>
<dbReference type="ExpressionAtlas" id="Q10P67">
    <property type="expression patterns" value="baseline and differential"/>
</dbReference>
<dbReference type="GO" id="GO:0009570">
    <property type="term" value="C:chloroplast stroma"/>
    <property type="evidence" value="ECO:0000318"/>
    <property type="project" value="GO_Central"/>
</dbReference>
<dbReference type="GO" id="GO:0008839">
    <property type="term" value="F:4-hydroxy-tetrahydrodipicolinate reductase"/>
    <property type="evidence" value="ECO:0000318"/>
    <property type="project" value="GO_Central"/>
</dbReference>
<dbReference type="GO" id="GO:0070402">
    <property type="term" value="F:NADPH binding"/>
    <property type="evidence" value="ECO:0007669"/>
    <property type="project" value="InterPro"/>
</dbReference>
<dbReference type="GO" id="GO:0019877">
    <property type="term" value="P:diaminopimelate biosynthetic process"/>
    <property type="evidence" value="ECO:0000318"/>
    <property type="project" value="GO_Central"/>
</dbReference>
<dbReference type="GO" id="GO:0009089">
    <property type="term" value="P:lysine biosynthetic process via diaminopimelate"/>
    <property type="evidence" value="ECO:0007669"/>
    <property type="project" value="UniProtKB-UniPathway"/>
</dbReference>
<dbReference type="FunFam" id="3.40.50.720:FF:000264">
    <property type="entry name" value="4-hydroxy-tetrahydrodipicolinate reductase 2 chloroplastic"/>
    <property type="match status" value="1"/>
</dbReference>
<dbReference type="FunFam" id="3.30.360.10:FF:000037">
    <property type="entry name" value="4-hydroxy-tetrahydrodipicolinate reductase 2, chloroplastic"/>
    <property type="match status" value="1"/>
</dbReference>
<dbReference type="Gene3D" id="3.30.360.10">
    <property type="entry name" value="Dihydrodipicolinate Reductase, domain 2"/>
    <property type="match status" value="1"/>
</dbReference>
<dbReference type="Gene3D" id="3.40.50.720">
    <property type="entry name" value="NAD(P)-binding Rossmann-like Domain"/>
    <property type="match status" value="1"/>
</dbReference>
<dbReference type="InterPro" id="IPR022663">
    <property type="entry name" value="DapB_C"/>
</dbReference>
<dbReference type="InterPro" id="IPR000846">
    <property type="entry name" value="DapB_N"/>
</dbReference>
<dbReference type="InterPro" id="IPR023940">
    <property type="entry name" value="DHDPR_bac"/>
</dbReference>
<dbReference type="InterPro" id="IPR011859">
    <property type="entry name" value="Dihydrodipicolinate_Rdtase_pln"/>
</dbReference>
<dbReference type="InterPro" id="IPR036291">
    <property type="entry name" value="NAD(P)-bd_dom_sf"/>
</dbReference>
<dbReference type="NCBIfam" id="TIGR02130">
    <property type="entry name" value="dapB_plant"/>
    <property type="match status" value="1"/>
</dbReference>
<dbReference type="PANTHER" id="PTHR20836:SF3">
    <property type="entry name" value="4-HYDROXY-TETRAHYDRODIPICOLINATE REDUCTASE 2, CHLOROPLASTIC-RELATED"/>
    <property type="match status" value="1"/>
</dbReference>
<dbReference type="PANTHER" id="PTHR20836">
    <property type="entry name" value="DIHYDRODIPICOLINATE REDUCTASE"/>
    <property type="match status" value="1"/>
</dbReference>
<dbReference type="Pfam" id="PF05173">
    <property type="entry name" value="DapB_C"/>
    <property type="match status" value="1"/>
</dbReference>
<dbReference type="Pfam" id="PF01113">
    <property type="entry name" value="DapB_N"/>
    <property type="match status" value="1"/>
</dbReference>
<dbReference type="SUPFAM" id="SSF51735">
    <property type="entry name" value="NAD(P)-binding Rossmann-fold domains"/>
    <property type="match status" value="1"/>
</dbReference>
<reference key="1">
    <citation type="journal article" date="2005" name="Genome Res.">
        <title>Sequence, annotation, and analysis of synteny between rice chromosome 3 and diverged grass species.</title>
        <authorList>
            <consortium name="The rice chromosome 3 sequencing consortium"/>
            <person name="Buell C.R."/>
            <person name="Yuan Q."/>
            <person name="Ouyang S."/>
            <person name="Liu J."/>
            <person name="Zhu W."/>
            <person name="Wang A."/>
            <person name="Maiti R."/>
            <person name="Haas B."/>
            <person name="Wortman J."/>
            <person name="Pertea M."/>
            <person name="Jones K.M."/>
            <person name="Kim M."/>
            <person name="Overton L."/>
            <person name="Tsitrin T."/>
            <person name="Fadrosh D."/>
            <person name="Bera J."/>
            <person name="Weaver B."/>
            <person name="Jin S."/>
            <person name="Johri S."/>
            <person name="Reardon M."/>
            <person name="Webb K."/>
            <person name="Hill J."/>
            <person name="Moffat K."/>
            <person name="Tallon L."/>
            <person name="Van Aken S."/>
            <person name="Lewis M."/>
            <person name="Utterback T."/>
            <person name="Feldblyum T."/>
            <person name="Zismann V."/>
            <person name="Iobst S."/>
            <person name="Hsiao J."/>
            <person name="de Vazeille A.R."/>
            <person name="Salzberg S.L."/>
            <person name="White O."/>
            <person name="Fraser C.M."/>
            <person name="Yu Y."/>
            <person name="Kim H."/>
            <person name="Rambo T."/>
            <person name="Currie J."/>
            <person name="Collura K."/>
            <person name="Kernodle-Thompson S."/>
            <person name="Wei F."/>
            <person name="Kudrna K."/>
            <person name="Ammiraju J.S.S."/>
            <person name="Luo M."/>
            <person name="Goicoechea J.L."/>
            <person name="Wing R.A."/>
            <person name="Henry D."/>
            <person name="Oates R."/>
            <person name="Palmer M."/>
            <person name="Pries G."/>
            <person name="Saski C."/>
            <person name="Simmons J."/>
            <person name="Soderlund C."/>
            <person name="Nelson W."/>
            <person name="de la Bastide M."/>
            <person name="Spiegel L."/>
            <person name="Nascimento L."/>
            <person name="Huang E."/>
            <person name="Preston R."/>
            <person name="Zutavern T."/>
            <person name="Palmer L."/>
            <person name="O'Shaughnessy A."/>
            <person name="Dike S."/>
            <person name="McCombie W.R."/>
            <person name="Minx P."/>
            <person name="Cordum H."/>
            <person name="Wilson R."/>
            <person name="Jin W."/>
            <person name="Lee H.R."/>
            <person name="Jiang J."/>
            <person name="Jackson S."/>
        </authorList>
    </citation>
    <scope>NUCLEOTIDE SEQUENCE [LARGE SCALE GENOMIC DNA]</scope>
    <source>
        <strain>cv. Nipponbare</strain>
    </source>
</reference>
<reference key="2">
    <citation type="journal article" date="2005" name="Nature">
        <title>The map-based sequence of the rice genome.</title>
        <authorList>
            <consortium name="International rice genome sequencing project (IRGSP)"/>
        </authorList>
    </citation>
    <scope>NUCLEOTIDE SEQUENCE [LARGE SCALE GENOMIC DNA]</scope>
    <source>
        <strain>cv. Nipponbare</strain>
    </source>
</reference>
<reference key="3">
    <citation type="journal article" date="2008" name="Nucleic Acids Res.">
        <title>The rice annotation project database (RAP-DB): 2008 update.</title>
        <authorList>
            <consortium name="The rice annotation project (RAP)"/>
        </authorList>
    </citation>
    <scope>GENOME REANNOTATION</scope>
    <source>
        <strain>cv. Nipponbare</strain>
    </source>
</reference>
<reference key="4">
    <citation type="journal article" date="2013" name="Rice">
        <title>Improvement of the Oryza sativa Nipponbare reference genome using next generation sequence and optical map data.</title>
        <authorList>
            <person name="Kawahara Y."/>
            <person name="de la Bastide M."/>
            <person name="Hamilton J.P."/>
            <person name="Kanamori H."/>
            <person name="McCombie W.R."/>
            <person name="Ouyang S."/>
            <person name="Schwartz D.C."/>
            <person name="Tanaka T."/>
            <person name="Wu J."/>
            <person name="Zhou S."/>
            <person name="Childs K.L."/>
            <person name="Davidson R.M."/>
            <person name="Lin H."/>
            <person name="Quesada-Ocampo L."/>
            <person name="Vaillancourt B."/>
            <person name="Sakai H."/>
            <person name="Lee S.S."/>
            <person name="Kim J."/>
            <person name="Numa H."/>
            <person name="Itoh T."/>
            <person name="Buell C.R."/>
            <person name="Matsumoto T."/>
        </authorList>
    </citation>
    <scope>GENOME REANNOTATION</scope>
    <source>
        <strain>cv. Nipponbare</strain>
    </source>
</reference>
<reference key="5">
    <citation type="journal article" date="2005" name="PLoS Biol.">
        <title>The genomes of Oryza sativa: a history of duplications.</title>
        <authorList>
            <person name="Yu J."/>
            <person name="Wang J."/>
            <person name="Lin W."/>
            <person name="Li S."/>
            <person name="Li H."/>
            <person name="Zhou J."/>
            <person name="Ni P."/>
            <person name="Dong W."/>
            <person name="Hu S."/>
            <person name="Zeng C."/>
            <person name="Zhang J."/>
            <person name="Zhang Y."/>
            <person name="Li R."/>
            <person name="Xu Z."/>
            <person name="Li S."/>
            <person name="Li X."/>
            <person name="Zheng H."/>
            <person name="Cong L."/>
            <person name="Lin L."/>
            <person name="Yin J."/>
            <person name="Geng J."/>
            <person name="Li G."/>
            <person name="Shi J."/>
            <person name="Liu J."/>
            <person name="Lv H."/>
            <person name="Li J."/>
            <person name="Wang J."/>
            <person name="Deng Y."/>
            <person name="Ran L."/>
            <person name="Shi X."/>
            <person name="Wang X."/>
            <person name="Wu Q."/>
            <person name="Li C."/>
            <person name="Ren X."/>
            <person name="Wang J."/>
            <person name="Wang X."/>
            <person name="Li D."/>
            <person name="Liu D."/>
            <person name="Zhang X."/>
            <person name="Ji Z."/>
            <person name="Zhao W."/>
            <person name="Sun Y."/>
            <person name="Zhang Z."/>
            <person name="Bao J."/>
            <person name="Han Y."/>
            <person name="Dong L."/>
            <person name="Ji J."/>
            <person name="Chen P."/>
            <person name="Wu S."/>
            <person name="Liu J."/>
            <person name="Xiao Y."/>
            <person name="Bu D."/>
            <person name="Tan J."/>
            <person name="Yang L."/>
            <person name="Ye C."/>
            <person name="Zhang J."/>
            <person name="Xu J."/>
            <person name="Zhou Y."/>
            <person name="Yu Y."/>
            <person name="Zhang B."/>
            <person name="Zhuang S."/>
            <person name="Wei H."/>
            <person name="Liu B."/>
            <person name="Lei M."/>
            <person name="Yu H."/>
            <person name="Li Y."/>
            <person name="Xu H."/>
            <person name="Wei S."/>
            <person name="He X."/>
            <person name="Fang L."/>
            <person name="Zhang Z."/>
            <person name="Zhang Y."/>
            <person name="Huang X."/>
            <person name="Su Z."/>
            <person name="Tong W."/>
            <person name="Li J."/>
            <person name="Tong Z."/>
            <person name="Li S."/>
            <person name="Ye J."/>
            <person name="Wang L."/>
            <person name="Fang L."/>
            <person name="Lei T."/>
            <person name="Chen C.-S."/>
            <person name="Chen H.-C."/>
            <person name="Xu Z."/>
            <person name="Li H."/>
            <person name="Huang H."/>
            <person name="Zhang F."/>
            <person name="Xu H."/>
            <person name="Li N."/>
            <person name="Zhao C."/>
            <person name="Li S."/>
            <person name="Dong L."/>
            <person name="Huang Y."/>
            <person name="Li L."/>
            <person name="Xi Y."/>
            <person name="Qi Q."/>
            <person name="Li W."/>
            <person name="Zhang B."/>
            <person name="Hu W."/>
            <person name="Zhang Y."/>
            <person name="Tian X."/>
            <person name="Jiao Y."/>
            <person name="Liang X."/>
            <person name="Jin J."/>
            <person name="Gao L."/>
            <person name="Zheng W."/>
            <person name="Hao B."/>
            <person name="Liu S.-M."/>
            <person name="Wang W."/>
            <person name="Yuan L."/>
            <person name="Cao M."/>
            <person name="McDermott J."/>
            <person name="Samudrala R."/>
            <person name="Wang J."/>
            <person name="Wong G.K.-S."/>
            <person name="Yang H."/>
        </authorList>
    </citation>
    <scope>NUCLEOTIDE SEQUENCE [LARGE SCALE GENOMIC DNA]</scope>
    <source>
        <strain>cv. Nipponbare</strain>
    </source>
</reference>
<reference key="6">
    <citation type="journal article" date="2003" name="Science">
        <title>Collection, mapping, and annotation of over 28,000 cDNA clones from japonica rice.</title>
        <authorList>
            <consortium name="The rice full-length cDNA consortium"/>
        </authorList>
    </citation>
    <scope>NUCLEOTIDE SEQUENCE [LARGE SCALE MRNA] (ISOFORMS 1 AND 2)</scope>
    <source>
        <strain>cv. Nipponbare</strain>
    </source>
</reference>
<sequence length="325" mass="35574">MLSLRPPCTLSPAPWRRRRTLHGAAGTPQRVSVAAPSAIVEAVSPPARFSFPILVNGCTGKMGLSVAEAVTSSGLHLVPISFSSRDTLDRTVRVGHTDVRIYGPSAREDVLSSVIDEFPDVVVVDYTAPDSVNANAELYCKLGLPFVMGTTGGDRQLLYKSVQDSNNYALISPQMGKQVVAFLAAMEIMAEQFPGAFSGYHLEVLESHQAGKLDISGTAKAVIACFEKLGVSYDMNRMVKIRDPEQQLEMVGVPEEHIEGHAFHLYHLTSPDDSVSFEFQHNVCGRSIYAEGSVDAAMFLHRKVRSNDSKRIYDMIDVLREGSMR</sequence>
<name>DAPB2_ORYSJ</name>
<proteinExistence type="evidence at transcript level"/>
<accession>Q10P67</accession>
<accession>A3AG10</accession>
<accession>B7ESW8</accession>
<accession>Q0DTI8</accession>
<accession>Q10P66</accession>